<organism>
    <name type="scientific">Staphylococcus aureus (strain Newman)</name>
    <dbReference type="NCBI Taxonomy" id="426430"/>
    <lineage>
        <taxon>Bacteria</taxon>
        <taxon>Bacillati</taxon>
        <taxon>Bacillota</taxon>
        <taxon>Bacilli</taxon>
        <taxon>Bacillales</taxon>
        <taxon>Staphylococcaceae</taxon>
        <taxon>Staphylococcus</taxon>
    </lineage>
</organism>
<sequence>MKFAVIGNPISHSLSPVMHRANFNSLGLDDTYEALNIPIEDFHLIKEIISKKELEGFNITIPHKERIIPYLDYVDEQAINAGAVNTVLIKDGKWIGYNTDGIGYVKGLHSVYPDLENAYILILGAGGASKGIAYELAKFVKPKLTVANRTMARFESWNLNINQISLADAEKYLAEFDIVINTTPAGMAGNNESIINLKHLSPNTLMSDIVYIPYKTPILEEAERKGNHIYNGLDMFVYQGAESFKIWTNKDADINSMKTAVLQQLKGE</sequence>
<feature type="chain" id="PRO_1000071757" description="Shikimate dehydrogenase (NADP(+))">
    <location>
        <begin position="1"/>
        <end position="268"/>
    </location>
</feature>
<feature type="active site" description="Proton acceptor" evidence="1">
    <location>
        <position position="64"/>
    </location>
</feature>
<feature type="binding site" evidence="1">
    <location>
        <begin position="13"/>
        <end position="15"/>
    </location>
    <ligand>
        <name>shikimate</name>
        <dbReference type="ChEBI" id="CHEBI:36208"/>
    </ligand>
</feature>
<feature type="binding site" evidence="1">
    <location>
        <position position="60"/>
    </location>
    <ligand>
        <name>shikimate</name>
        <dbReference type="ChEBI" id="CHEBI:36208"/>
    </ligand>
</feature>
<feature type="binding site" evidence="1">
    <location>
        <position position="76"/>
    </location>
    <ligand>
        <name>NADP(+)</name>
        <dbReference type="ChEBI" id="CHEBI:58349"/>
    </ligand>
</feature>
<feature type="binding site" evidence="1">
    <location>
        <position position="85"/>
    </location>
    <ligand>
        <name>shikimate</name>
        <dbReference type="ChEBI" id="CHEBI:36208"/>
    </ligand>
</feature>
<feature type="binding site" evidence="1">
    <location>
        <position position="100"/>
    </location>
    <ligand>
        <name>shikimate</name>
        <dbReference type="ChEBI" id="CHEBI:36208"/>
    </ligand>
</feature>
<feature type="binding site" evidence="1">
    <location>
        <begin position="124"/>
        <end position="128"/>
    </location>
    <ligand>
        <name>NADP(+)</name>
        <dbReference type="ChEBI" id="CHEBI:58349"/>
    </ligand>
</feature>
<feature type="binding site" evidence="1">
    <location>
        <begin position="148"/>
        <end position="153"/>
    </location>
    <ligand>
        <name>NADP(+)</name>
        <dbReference type="ChEBI" id="CHEBI:58349"/>
    </ligand>
</feature>
<feature type="binding site" evidence="1">
    <location>
        <position position="209"/>
    </location>
    <ligand>
        <name>NADP(+)</name>
        <dbReference type="ChEBI" id="CHEBI:58349"/>
    </ligand>
</feature>
<feature type="binding site" evidence="1">
    <location>
        <position position="211"/>
    </location>
    <ligand>
        <name>shikimate</name>
        <dbReference type="ChEBI" id="CHEBI:36208"/>
    </ligand>
</feature>
<feature type="binding site" evidence="1">
    <location>
        <position position="232"/>
    </location>
    <ligand>
        <name>NADP(+)</name>
        <dbReference type="ChEBI" id="CHEBI:58349"/>
    </ligand>
</feature>
<protein>
    <recommendedName>
        <fullName evidence="1">Shikimate dehydrogenase (NADP(+))</fullName>
        <shortName evidence="1">SDH</shortName>
        <ecNumber evidence="1">1.1.1.25</ecNumber>
    </recommendedName>
</protein>
<accession>A6QHD8</accession>
<reference key="1">
    <citation type="journal article" date="2008" name="J. Bacteriol.">
        <title>Genome sequence of Staphylococcus aureus strain Newman and comparative analysis of staphylococcal genomes: polymorphism and evolution of two major pathogenicity islands.</title>
        <authorList>
            <person name="Baba T."/>
            <person name="Bae T."/>
            <person name="Schneewind O."/>
            <person name="Takeuchi F."/>
            <person name="Hiramatsu K."/>
        </authorList>
    </citation>
    <scope>NUCLEOTIDE SEQUENCE [LARGE SCALE GENOMIC DNA]</scope>
    <source>
        <strain>Newman</strain>
    </source>
</reference>
<evidence type="ECO:0000255" key="1">
    <source>
        <dbReference type="HAMAP-Rule" id="MF_00222"/>
    </source>
</evidence>
<comment type="function">
    <text evidence="1">Involved in the biosynthesis of the chorismate, which leads to the biosynthesis of aromatic amino acids. Catalyzes the reversible NADPH linked reduction of 3-dehydroshikimate (DHSA) to yield shikimate (SA).</text>
</comment>
<comment type="catalytic activity">
    <reaction evidence="1">
        <text>shikimate + NADP(+) = 3-dehydroshikimate + NADPH + H(+)</text>
        <dbReference type="Rhea" id="RHEA:17737"/>
        <dbReference type="ChEBI" id="CHEBI:15378"/>
        <dbReference type="ChEBI" id="CHEBI:16630"/>
        <dbReference type="ChEBI" id="CHEBI:36208"/>
        <dbReference type="ChEBI" id="CHEBI:57783"/>
        <dbReference type="ChEBI" id="CHEBI:58349"/>
        <dbReference type="EC" id="1.1.1.25"/>
    </reaction>
</comment>
<comment type="pathway">
    <text evidence="1">Metabolic intermediate biosynthesis; chorismate biosynthesis; chorismate from D-erythrose 4-phosphate and phosphoenolpyruvate: step 4/7.</text>
</comment>
<comment type="subunit">
    <text evidence="1">Homodimer.</text>
</comment>
<comment type="similarity">
    <text evidence="1">Belongs to the shikimate dehydrogenase family.</text>
</comment>
<name>AROE_STAAE</name>
<proteinExistence type="inferred from homology"/>
<dbReference type="EC" id="1.1.1.25" evidence="1"/>
<dbReference type="EMBL" id="AP009351">
    <property type="protein sequence ID" value="BAF67770.1"/>
    <property type="molecule type" value="Genomic_DNA"/>
</dbReference>
<dbReference type="RefSeq" id="WP_000666761.1">
    <property type="nucleotide sequence ID" value="NZ_JBBIAE010000001.1"/>
</dbReference>
<dbReference type="SMR" id="A6QHD8"/>
<dbReference type="KEGG" id="sae:NWMN_1498"/>
<dbReference type="HOGENOM" id="CLU_044063_4_1_9"/>
<dbReference type="UniPathway" id="UPA00053">
    <property type="reaction ID" value="UER00087"/>
</dbReference>
<dbReference type="Proteomes" id="UP000006386">
    <property type="component" value="Chromosome"/>
</dbReference>
<dbReference type="GO" id="GO:0005829">
    <property type="term" value="C:cytosol"/>
    <property type="evidence" value="ECO:0007669"/>
    <property type="project" value="TreeGrafter"/>
</dbReference>
<dbReference type="GO" id="GO:0050661">
    <property type="term" value="F:NADP binding"/>
    <property type="evidence" value="ECO:0007669"/>
    <property type="project" value="InterPro"/>
</dbReference>
<dbReference type="GO" id="GO:0004764">
    <property type="term" value="F:shikimate 3-dehydrogenase (NADP+) activity"/>
    <property type="evidence" value="ECO:0007669"/>
    <property type="project" value="UniProtKB-UniRule"/>
</dbReference>
<dbReference type="GO" id="GO:0008652">
    <property type="term" value="P:amino acid biosynthetic process"/>
    <property type="evidence" value="ECO:0007669"/>
    <property type="project" value="UniProtKB-KW"/>
</dbReference>
<dbReference type="GO" id="GO:0009073">
    <property type="term" value="P:aromatic amino acid family biosynthetic process"/>
    <property type="evidence" value="ECO:0007669"/>
    <property type="project" value="UniProtKB-KW"/>
</dbReference>
<dbReference type="GO" id="GO:0009423">
    <property type="term" value="P:chorismate biosynthetic process"/>
    <property type="evidence" value="ECO:0007669"/>
    <property type="project" value="UniProtKB-UniRule"/>
</dbReference>
<dbReference type="GO" id="GO:0019632">
    <property type="term" value="P:shikimate metabolic process"/>
    <property type="evidence" value="ECO:0007669"/>
    <property type="project" value="InterPro"/>
</dbReference>
<dbReference type="CDD" id="cd01065">
    <property type="entry name" value="NAD_bind_Shikimate_DH"/>
    <property type="match status" value="1"/>
</dbReference>
<dbReference type="FunFam" id="3.40.50.10860:FF:000016">
    <property type="entry name" value="Shikimate dehydrogenase (NADP(+))"/>
    <property type="match status" value="1"/>
</dbReference>
<dbReference type="FunFam" id="3.40.50.720:FF:000445">
    <property type="entry name" value="Shikimate dehydrogenase (NADP(+))"/>
    <property type="match status" value="1"/>
</dbReference>
<dbReference type="Gene3D" id="3.40.50.10860">
    <property type="entry name" value="Leucine Dehydrogenase, chain A, domain 1"/>
    <property type="match status" value="1"/>
</dbReference>
<dbReference type="Gene3D" id="3.40.50.720">
    <property type="entry name" value="NAD(P)-binding Rossmann-like Domain"/>
    <property type="match status" value="1"/>
</dbReference>
<dbReference type="HAMAP" id="MF_00222">
    <property type="entry name" value="Shikimate_DH_AroE"/>
    <property type="match status" value="1"/>
</dbReference>
<dbReference type="InterPro" id="IPR046346">
    <property type="entry name" value="Aminoacid_DH-like_N_sf"/>
</dbReference>
<dbReference type="InterPro" id="IPR036291">
    <property type="entry name" value="NAD(P)-bd_dom_sf"/>
</dbReference>
<dbReference type="InterPro" id="IPR041121">
    <property type="entry name" value="SDH_C"/>
</dbReference>
<dbReference type="InterPro" id="IPR011342">
    <property type="entry name" value="Shikimate_DH"/>
</dbReference>
<dbReference type="InterPro" id="IPR013708">
    <property type="entry name" value="Shikimate_DH-bd_N"/>
</dbReference>
<dbReference type="InterPro" id="IPR022893">
    <property type="entry name" value="Shikimate_DH_fam"/>
</dbReference>
<dbReference type="InterPro" id="IPR006151">
    <property type="entry name" value="Shikm_DH/Glu-tRNA_Rdtase"/>
</dbReference>
<dbReference type="NCBIfam" id="TIGR00507">
    <property type="entry name" value="aroE"/>
    <property type="match status" value="1"/>
</dbReference>
<dbReference type="PANTHER" id="PTHR21089:SF1">
    <property type="entry name" value="BIFUNCTIONAL 3-DEHYDROQUINATE DEHYDRATASE_SHIKIMATE DEHYDROGENASE, CHLOROPLASTIC"/>
    <property type="match status" value="1"/>
</dbReference>
<dbReference type="PANTHER" id="PTHR21089">
    <property type="entry name" value="SHIKIMATE DEHYDROGENASE"/>
    <property type="match status" value="1"/>
</dbReference>
<dbReference type="Pfam" id="PF18317">
    <property type="entry name" value="SDH_C"/>
    <property type="match status" value="1"/>
</dbReference>
<dbReference type="Pfam" id="PF01488">
    <property type="entry name" value="Shikimate_DH"/>
    <property type="match status" value="1"/>
</dbReference>
<dbReference type="Pfam" id="PF08501">
    <property type="entry name" value="Shikimate_dh_N"/>
    <property type="match status" value="1"/>
</dbReference>
<dbReference type="SUPFAM" id="SSF53223">
    <property type="entry name" value="Aminoacid dehydrogenase-like, N-terminal domain"/>
    <property type="match status" value="1"/>
</dbReference>
<dbReference type="SUPFAM" id="SSF51735">
    <property type="entry name" value="NAD(P)-binding Rossmann-fold domains"/>
    <property type="match status" value="1"/>
</dbReference>
<gene>
    <name evidence="1" type="primary">aroE</name>
    <name type="ordered locus">NWMN_1498</name>
</gene>
<keyword id="KW-0028">Amino-acid biosynthesis</keyword>
<keyword id="KW-0057">Aromatic amino acid biosynthesis</keyword>
<keyword id="KW-0521">NADP</keyword>
<keyword id="KW-0560">Oxidoreductase</keyword>